<feature type="chain" id="PRO_0000089288" description="Caldesmon">
    <location>
        <begin position="1"/>
        <end position="793"/>
    </location>
</feature>
<feature type="repeat" description="1">
    <location>
        <begin position="319"/>
        <end position="332"/>
    </location>
</feature>
<feature type="repeat" description="2">
    <location>
        <begin position="333"/>
        <end position="346"/>
    </location>
</feature>
<feature type="repeat" description="3">
    <location>
        <begin position="347"/>
        <end position="360"/>
    </location>
</feature>
<feature type="region of interest" description="Myosin and calmodulin-binding" evidence="1">
    <location>
        <begin position="26"/>
        <end position="207"/>
    </location>
</feature>
<feature type="region of interest" description="Disordered" evidence="4">
    <location>
        <begin position="26"/>
        <end position="94"/>
    </location>
</feature>
<feature type="region of interest" description="Disordered" evidence="4">
    <location>
        <begin position="108"/>
        <end position="407"/>
    </location>
</feature>
<feature type="region of interest" description="3 X 14 AA tandem repeats of E-E-E-K-R-A-A-E-E-R-Q-R-I-K">
    <location>
        <begin position="319"/>
        <end position="375"/>
    </location>
</feature>
<feature type="region of interest" description="Disordered" evidence="4">
    <location>
        <begin position="434"/>
        <end position="458"/>
    </location>
</feature>
<feature type="region of interest" description="Disordered" evidence="4">
    <location>
        <begin position="492"/>
        <end position="640"/>
    </location>
</feature>
<feature type="region of interest" description="Tropomyosin-binding" evidence="3">
    <location>
        <begin position="564"/>
        <end position="621"/>
    </location>
</feature>
<feature type="region of interest" description="Strong actin-binding" evidence="1">
    <location>
        <begin position="653"/>
        <end position="686"/>
    </location>
</feature>
<feature type="region of interest" description="Tropomyosin-binding" evidence="3">
    <location>
        <begin position="664"/>
        <end position="674"/>
    </location>
</feature>
<feature type="region of interest" description="Disordered" evidence="4">
    <location>
        <begin position="687"/>
        <end position="706"/>
    </location>
</feature>
<feature type="region of interest" description="Calmodulin-binding" evidence="1">
    <location>
        <begin position="716"/>
        <end position="722"/>
    </location>
</feature>
<feature type="region of interest" description="Disordered" evidence="4">
    <location>
        <begin position="721"/>
        <end position="740"/>
    </location>
</feature>
<feature type="region of interest" description="Disordered" evidence="4">
    <location>
        <begin position="747"/>
        <end position="793"/>
    </location>
</feature>
<feature type="region of interest" description="Weak actin-binding" evidence="1">
    <location>
        <begin position="768"/>
        <end position="793"/>
    </location>
</feature>
<feature type="compositionally biased region" description="Basic and acidic residues" evidence="4">
    <location>
        <begin position="47"/>
        <end position="56"/>
    </location>
</feature>
<feature type="compositionally biased region" description="Polar residues" evidence="4">
    <location>
        <begin position="60"/>
        <end position="74"/>
    </location>
</feature>
<feature type="compositionally biased region" description="Basic and acidic residues" evidence="4">
    <location>
        <begin position="108"/>
        <end position="122"/>
    </location>
</feature>
<feature type="compositionally biased region" description="Basic and acidic residues" evidence="4">
    <location>
        <begin position="146"/>
        <end position="162"/>
    </location>
</feature>
<feature type="compositionally biased region" description="Basic and acidic residues" evidence="4">
    <location>
        <begin position="173"/>
        <end position="188"/>
    </location>
</feature>
<feature type="compositionally biased region" description="Basic and acidic residues" evidence="4">
    <location>
        <begin position="236"/>
        <end position="407"/>
    </location>
</feature>
<feature type="compositionally biased region" description="Basic and acidic residues" evidence="4">
    <location>
        <begin position="435"/>
        <end position="458"/>
    </location>
</feature>
<feature type="compositionally biased region" description="Basic and acidic residues" evidence="4">
    <location>
        <begin position="532"/>
        <end position="558"/>
    </location>
</feature>
<feature type="compositionally biased region" description="Basic and acidic residues" evidence="4">
    <location>
        <begin position="566"/>
        <end position="633"/>
    </location>
</feature>
<feature type="compositionally biased region" description="Polar residues" evidence="4">
    <location>
        <begin position="721"/>
        <end position="733"/>
    </location>
</feature>
<feature type="compositionally biased region" description="Basic and acidic residues" evidence="4">
    <location>
        <begin position="765"/>
        <end position="784"/>
    </location>
</feature>
<feature type="modified residue" description="Phosphoserine" evidence="19">
    <location>
        <position position="129"/>
    </location>
</feature>
<feature type="modified residue" description="Phosphoserine" evidence="17">
    <location>
        <position position="643"/>
    </location>
</feature>
<feature type="modified residue" description="Phosphoserine" evidence="18">
    <location>
        <position position="656"/>
    </location>
</feature>
<feature type="modified residue" description="Phosphoserine" evidence="15 16">
    <location>
        <position position="724"/>
    </location>
</feature>
<feature type="modified residue" description="Phosphothreonine" evidence="13 14 15 16 18">
    <location>
        <position position="730"/>
    </location>
</feature>
<feature type="modified residue" description="Phosphothreonine" evidence="15 16 18 19">
    <location>
        <position position="753"/>
    </location>
</feature>
<feature type="modified residue" description="Phosphoserine" evidence="18">
    <location>
        <position position="759"/>
    </location>
</feature>
<feature type="modified residue" description="Phosphoserine" evidence="15 17">
    <location>
        <position position="789"/>
    </location>
</feature>
<feature type="cross-link" description="Glycyl lysine isopeptide (Lys-Gly) (interchain with G-Cter in SUMO2)" evidence="20">
    <location>
        <position position="459"/>
    </location>
</feature>
<feature type="cross-link" description="Glycyl lysine isopeptide (Lys-Gly) (interchain with G-Cter in SUMO2)" evidence="20">
    <location>
        <position position="645"/>
    </location>
</feature>
<feature type="splice variant" id="VSP_004154" description="In isoform 3 and isoform 5." evidence="7">
    <original>MDDFERRRELRRQKREEMRLEAER</original>
    <variation>MLGGSGSHGRRSLAALSQ</variation>
    <location>
        <begin position="1"/>
        <end position="24"/>
    </location>
</feature>
<feature type="splice variant" id="VSP_004156" description="In isoform 4 and isoform 5." evidence="7 9 10 11">
    <location>
        <begin position="208"/>
        <end position="462"/>
    </location>
</feature>
<feature type="splice variant" id="VSP_004155" description="In isoform 2, isoform 3 and isoform 6." evidence="7 8">
    <location>
        <begin position="208"/>
        <end position="436"/>
    </location>
</feature>
<feature type="splice variant" id="VSP_043292" description="In isoform 6." evidence="8">
    <location>
        <position position="660"/>
    </location>
</feature>
<feature type="sequence variant" id="VAR_065254" description="In dbSNP:rs6973420." evidence="5">
    <original>H</original>
    <variation>R</variation>
    <location>
        <position position="397"/>
    </location>
</feature>
<feature type="sequence conflict" description="In Ref. 1; AAA35636." evidence="12" ref="1">
    <original>V</original>
    <variation>M</variation>
    <location>
        <position position="530"/>
    </location>
</feature>
<feature type="modified residue" description="Phosphoserine" evidence="13 16 17 19">
    <location sequence="Q05682-2">
        <position position="202"/>
    </location>
</feature>
<feature type="modified residue" description="Phosphoserine" evidence="15 16">
    <location sequence="Q05682-3">
        <position position="12"/>
    </location>
</feature>
<feature type="modified residue" description="Phosphotyrosine" evidence="16">
    <location sequence="Q05682-3">
        <position position="21"/>
    </location>
</feature>
<feature type="modified residue" description="Phosphoserine" evidence="13 16 17 19">
    <location sequence="Q05682-3">
        <position position="196"/>
    </location>
</feature>
<feature type="modified residue" description="Phosphoserine" evidence="13 16 17 19">
    <location sequence="Q05682-4">
        <position position="202"/>
    </location>
</feature>
<feature type="cross-link" description="Glycyl lysine isopeptide (Lys-Gly) (interchain with G-Cter in SUMO2)" evidence="20">
    <location sequence="Q05682-4">
        <position position="209"/>
    </location>
</feature>
<feature type="modified residue" description="Phosphoserine" evidence="15 16">
    <location sequence="Q05682-5">
        <position position="12"/>
    </location>
</feature>
<feature type="modified residue" description="Phosphotyrosine" evidence="16">
    <location sequence="Q05682-5">
        <position position="21"/>
    </location>
</feature>
<feature type="modified residue" description="Phosphoserine" evidence="13 16 17 19">
    <location sequence="Q05682-5">
        <position position="196"/>
    </location>
</feature>
<feature type="cross-link" description="Glycyl lysine isopeptide (Lys-Gly) (interchain with G-Cter in SUMO2)" evidence="20">
    <location sequence="Q05682-5">
        <position position="203"/>
    </location>
</feature>
<feature type="modified residue" description="Phosphoserine" evidence="13 16 17 19">
    <location sequence="Q05682-6">
        <position position="202"/>
    </location>
</feature>
<keyword id="KW-0009">Actin-binding</keyword>
<keyword id="KW-0025">Alternative splicing</keyword>
<keyword id="KW-0112">Calmodulin-binding</keyword>
<keyword id="KW-0963">Cytoplasm</keyword>
<keyword id="KW-0206">Cytoskeleton</keyword>
<keyword id="KW-1017">Isopeptide bond</keyword>
<keyword id="KW-0514">Muscle protein</keyword>
<keyword id="KW-0597">Phosphoprotein</keyword>
<keyword id="KW-1267">Proteomics identification</keyword>
<keyword id="KW-1185">Reference proteome</keyword>
<keyword id="KW-0677">Repeat</keyword>
<keyword id="KW-0832">Ubl conjugation</keyword>
<name>CALD1_HUMAN</name>
<accession>Q05682</accession>
<accession>A8K0X1</accession>
<accession>Q13978</accession>
<accession>Q13979</accession>
<accession>Q14741</accession>
<accession>Q14742</accession>
<accession>Q9UD91</accession>
<organism>
    <name type="scientific">Homo sapiens</name>
    <name type="common">Human</name>
    <dbReference type="NCBI Taxonomy" id="9606"/>
    <lineage>
        <taxon>Eukaryota</taxon>
        <taxon>Metazoa</taxon>
        <taxon>Chordata</taxon>
        <taxon>Craniata</taxon>
        <taxon>Vertebrata</taxon>
        <taxon>Euteleostomi</taxon>
        <taxon>Mammalia</taxon>
        <taxon>Eutheria</taxon>
        <taxon>Euarchontoglires</taxon>
        <taxon>Primates</taxon>
        <taxon>Haplorrhini</taxon>
        <taxon>Catarrhini</taxon>
        <taxon>Hominidae</taxon>
        <taxon>Homo</taxon>
    </lineage>
</organism>
<dbReference type="EMBL" id="M64110">
    <property type="protein sequence ID" value="AAA35636.1"/>
    <property type="molecule type" value="mRNA"/>
</dbReference>
<dbReference type="EMBL" id="M83216">
    <property type="protein sequence ID" value="AAA58420.1"/>
    <property type="molecule type" value="mRNA"/>
</dbReference>
<dbReference type="EMBL" id="M83216">
    <property type="protein sequence ID" value="AAA58419.1"/>
    <property type="molecule type" value="mRNA"/>
</dbReference>
<dbReference type="EMBL" id="D90452">
    <property type="protein sequence ID" value="BAA14418.1"/>
    <property type="molecule type" value="mRNA"/>
</dbReference>
<dbReference type="EMBL" id="D90453">
    <property type="protein sequence ID" value="BAA14419.1"/>
    <property type="molecule type" value="mRNA"/>
</dbReference>
<dbReference type="EMBL" id="AK289686">
    <property type="protein sequence ID" value="BAF82375.1"/>
    <property type="molecule type" value="mRNA"/>
</dbReference>
<dbReference type="EMBL" id="AC019014">
    <property type="status" value="NOT_ANNOTATED_CDS"/>
    <property type="molecule type" value="Genomic_DNA"/>
</dbReference>
<dbReference type="EMBL" id="AC083870">
    <property type="status" value="NOT_ANNOTATED_CDS"/>
    <property type="molecule type" value="Genomic_DNA"/>
</dbReference>
<dbReference type="EMBL" id="BC040354">
    <property type="protein sequence ID" value="AAH40354.1"/>
    <property type="molecule type" value="mRNA"/>
</dbReference>
<dbReference type="CCDS" id="CCDS47716.1">
    <molecule id="Q05682-3"/>
</dbReference>
<dbReference type="CCDS" id="CCDS47717.1">
    <molecule id="Q05682-5"/>
</dbReference>
<dbReference type="CCDS" id="CCDS5834.1">
    <molecule id="Q05682-4"/>
</dbReference>
<dbReference type="CCDS" id="CCDS5835.1">
    <molecule id="Q05682-1"/>
</dbReference>
<dbReference type="CCDS" id="CCDS5836.2">
    <molecule id="Q05682-6"/>
</dbReference>
<dbReference type="PIR" id="JH0628">
    <property type="entry name" value="JH0628"/>
</dbReference>
<dbReference type="RefSeq" id="NP_004333.1">
    <molecule id="Q05682-4"/>
    <property type="nucleotide sequence ID" value="NM_004342.7"/>
</dbReference>
<dbReference type="RefSeq" id="NP_149129.2">
    <molecule id="Q05682-1"/>
    <property type="nucleotide sequence ID" value="NM_033138.3"/>
</dbReference>
<dbReference type="RefSeq" id="NP_149130.1">
    <molecule id="Q05682-3"/>
    <property type="nucleotide sequence ID" value="NM_033139.4"/>
</dbReference>
<dbReference type="RefSeq" id="NP_149131.1">
    <molecule id="Q05682-5"/>
    <property type="nucleotide sequence ID" value="NM_033140.4"/>
</dbReference>
<dbReference type="RefSeq" id="NP_149347.2">
    <molecule id="Q05682-6"/>
    <property type="nucleotide sequence ID" value="NM_033157.4"/>
</dbReference>
<dbReference type="RefSeq" id="XP_016868140.1">
    <property type="nucleotide sequence ID" value="XM_017012651.1"/>
</dbReference>
<dbReference type="RefSeq" id="XP_016868141.1">
    <molecule id="Q05682-4"/>
    <property type="nucleotide sequence ID" value="XM_017012652.2"/>
</dbReference>
<dbReference type="RefSeq" id="XP_024302710.1">
    <molecule id="Q05682-2"/>
    <property type="nucleotide sequence ID" value="XM_024446942.2"/>
</dbReference>
<dbReference type="RefSeq" id="XP_047276821.1">
    <molecule id="Q05682-2"/>
    <property type="nucleotide sequence ID" value="XM_047420865.1"/>
</dbReference>
<dbReference type="RefSeq" id="XP_047276822.1">
    <molecule id="Q05682-2"/>
    <property type="nucleotide sequence ID" value="XM_047420866.1"/>
</dbReference>
<dbReference type="RefSeq" id="XP_047276823.1">
    <molecule id="Q05682-6"/>
    <property type="nucleotide sequence ID" value="XM_047420867.1"/>
</dbReference>
<dbReference type="RefSeq" id="XP_047276830.1">
    <molecule id="Q05682-4"/>
    <property type="nucleotide sequence ID" value="XM_047420874.1"/>
</dbReference>
<dbReference type="RefSeq" id="XP_054215039.1">
    <molecule id="Q05682-2"/>
    <property type="nucleotide sequence ID" value="XM_054359064.1"/>
</dbReference>
<dbReference type="RefSeq" id="XP_054215040.1">
    <molecule id="Q05682-2"/>
    <property type="nucleotide sequence ID" value="XM_054359065.1"/>
</dbReference>
<dbReference type="RefSeq" id="XP_054215041.1">
    <molecule id="Q05682-2"/>
    <property type="nucleotide sequence ID" value="XM_054359066.1"/>
</dbReference>
<dbReference type="RefSeq" id="XP_054215042.1">
    <molecule id="Q05682-6"/>
    <property type="nucleotide sequence ID" value="XM_054359067.1"/>
</dbReference>
<dbReference type="RefSeq" id="XP_054215049.1">
    <molecule id="Q05682-4"/>
    <property type="nucleotide sequence ID" value="XM_054359074.1"/>
</dbReference>
<dbReference type="RefSeq" id="XP_054215050.1">
    <molecule id="Q05682-4"/>
    <property type="nucleotide sequence ID" value="XM_054359075.1"/>
</dbReference>
<dbReference type="BMRB" id="Q05682"/>
<dbReference type="SMR" id="Q05682"/>
<dbReference type="BioGRID" id="107251">
    <property type="interactions" value="290"/>
</dbReference>
<dbReference type="FunCoup" id="Q05682">
    <property type="interactions" value="1146"/>
</dbReference>
<dbReference type="IntAct" id="Q05682">
    <property type="interactions" value="175"/>
</dbReference>
<dbReference type="MINT" id="Q05682"/>
<dbReference type="STRING" id="9606.ENSP00000354826"/>
<dbReference type="GlyGen" id="Q05682">
    <property type="glycosylation" value="3 sites, 1 O-linked glycan (3 sites)"/>
</dbReference>
<dbReference type="iPTMnet" id="Q05682"/>
<dbReference type="MetOSite" id="Q05682"/>
<dbReference type="PhosphoSitePlus" id="Q05682"/>
<dbReference type="SwissPalm" id="Q05682"/>
<dbReference type="BioMuta" id="CALD1"/>
<dbReference type="DMDM" id="338817891"/>
<dbReference type="OGP" id="Q05682"/>
<dbReference type="CPTAC" id="CPTAC-323"/>
<dbReference type="CPTAC" id="CPTAC-324"/>
<dbReference type="jPOST" id="Q05682"/>
<dbReference type="MassIVE" id="Q05682"/>
<dbReference type="PaxDb" id="9606-ENSP00000354826"/>
<dbReference type="PeptideAtlas" id="Q05682"/>
<dbReference type="ProteomicsDB" id="58344">
    <molecule id="Q05682-1"/>
</dbReference>
<dbReference type="ProteomicsDB" id="58345">
    <molecule id="Q05682-2"/>
</dbReference>
<dbReference type="ProteomicsDB" id="58346">
    <molecule id="Q05682-3"/>
</dbReference>
<dbReference type="ProteomicsDB" id="58347">
    <molecule id="Q05682-4"/>
</dbReference>
<dbReference type="ProteomicsDB" id="58348">
    <molecule id="Q05682-5"/>
</dbReference>
<dbReference type="ProteomicsDB" id="58349">
    <molecule id="Q05682-6"/>
</dbReference>
<dbReference type="Antibodypedia" id="1954">
    <property type="antibodies" value="1363 antibodies from 47 providers"/>
</dbReference>
<dbReference type="DNASU" id="800"/>
<dbReference type="Ensembl" id="ENST00000361675.7">
    <molecule id="Q05682-1"/>
    <property type="protein sequence ID" value="ENSP00000354826.2"/>
    <property type="gene ID" value="ENSG00000122786.20"/>
</dbReference>
<dbReference type="Ensembl" id="ENST00000361901.6">
    <molecule id="Q05682-4"/>
    <property type="protein sequence ID" value="ENSP00000354513.2"/>
    <property type="gene ID" value="ENSG00000122786.20"/>
</dbReference>
<dbReference type="Ensembl" id="ENST00000393118.7">
    <molecule id="Q05682-3"/>
    <property type="protein sequence ID" value="ENSP00000376826.2"/>
    <property type="gene ID" value="ENSG00000122786.20"/>
</dbReference>
<dbReference type="Ensembl" id="ENST00000417172.5">
    <molecule id="Q05682-4"/>
    <property type="protein sequence ID" value="ENSP00000398826.1"/>
    <property type="gene ID" value="ENSG00000122786.20"/>
</dbReference>
<dbReference type="Ensembl" id="ENST00000422748.5">
    <molecule id="Q05682-6"/>
    <property type="protein sequence ID" value="ENSP00000395710.1"/>
    <property type="gene ID" value="ENSG00000122786.20"/>
</dbReference>
<dbReference type="Ensembl" id="ENST00000424922.5">
    <molecule id="Q05682-5"/>
    <property type="protein sequence ID" value="ENSP00000393621.1"/>
    <property type="gene ID" value="ENSG00000122786.20"/>
</dbReference>
<dbReference type="GeneID" id="800"/>
<dbReference type="KEGG" id="hsa:800"/>
<dbReference type="MANE-Select" id="ENST00000361675.7">
    <property type="protein sequence ID" value="ENSP00000354826.2"/>
    <property type="RefSeq nucleotide sequence ID" value="NM_033138.4"/>
    <property type="RefSeq protein sequence ID" value="NP_149129.2"/>
</dbReference>
<dbReference type="UCSC" id="uc003vrz.4">
    <molecule id="Q05682-1"/>
    <property type="organism name" value="human"/>
</dbReference>
<dbReference type="AGR" id="HGNC:1441"/>
<dbReference type="CTD" id="800"/>
<dbReference type="DisGeNET" id="800"/>
<dbReference type="GeneCards" id="CALD1"/>
<dbReference type="HGNC" id="HGNC:1441">
    <property type="gene designation" value="CALD1"/>
</dbReference>
<dbReference type="HPA" id="ENSG00000122786">
    <property type="expression patterns" value="Tissue enhanced (intestine)"/>
</dbReference>
<dbReference type="MIM" id="114213">
    <property type="type" value="gene"/>
</dbReference>
<dbReference type="neXtProt" id="NX_Q05682"/>
<dbReference type="OpenTargets" id="ENSG00000122786"/>
<dbReference type="PharmGKB" id="PA26034"/>
<dbReference type="VEuPathDB" id="HostDB:ENSG00000122786"/>
<dbReference type="eggNOG" id="ENOG502QSYB">
    <property type="taxonomic scope" value="Eukaryota"/>
</dbReference>
<dbReference type="GeneTree" id="ENSGT00940000153901"/>
<dbReference type="HOGENOM" id="CLU_017579_1_0_1"/>
<dbReference type="InParanoid" id="Q05682"/>
<dbReference type="OMA" id="NETMGKE"/>
<dbReference type="OrthoDB" id="9908857at2759"/>
<dbReference type="PAN-GO" id="Q05682">
    <property type="GO annotations" value="5 GO annotations based on evolutionary models"/>
</dbReference>
<dbReference type="PhylomeDB" id="Q05682"/>
<dbReference type="TreeFam" id="TF331771"/>
<dbReference type="PathwayCommons" id="Q05682"/>
<dbReference type="Reactome" id="R-HSA-445355">
    <property type="pathway name" value="Smooth Muscle Contraction"/>
</dbReference>
<dbReference type="SignaLink" id="Q05682"/>
<dbReference type="SIGNOR" id="Q05682"/>
<dbReference type="BioGRID-ORCS" id="800">
    <property type="hits" value="20 hits in 1152 CRISPR screens"/>
</dbReference>
<dbReference type="ChiTaRS" id="CALD1">
    <property type="organism name" value="human"/>
</dbReference>
<dbReference type="GeneWiki" id="Caldesmon"/>
<dbReference type="GenomeRNAi" id="800"/>
<dbReference type="Pharos" id="Q05682">
    <property type="development level" value="Tbio"/>
</dbReference>
<dbReference type="PRO" id="PR:Q05682"/>
<dbReference type="Proteomes" id="UP000005640">
    <property type="component" value="Chromosome 7"/>
</dbReference>
<dbReference type="RNAct" id="Q05682">
    <property type="molecule type" value="protein"/>
</dbReference>
<dbReference type="Bgee" id="ENSG00000122786">
    <property type="expression patterns" value="Expressed in blood vessel layer and 220 other cell types or tissues"/>
</dbReference>
<dbReference type="ExpressionAtlas" id="Q05682">
    <property type="expression patterns" value="baseline and differential"/>
</dbReference>
<dbReference type="GO" id="GO:0030478">
    <property type="term" value="C:actin cap"/>
    <property type="evidence" value="ECO:0007669"/>
    <property type="project" value="Ensembl"/>
</dbReference>
<dbReference type="GO" id="GO:0015629">
    <property type="term" value="C:actin cytoskeleton"/>
    <property type="evidence" value="ECO:0000314"/>
    <property type="project" value="HPA"/>
</dbReference>
<dbReference type="GO" id="GO:0005856">
    <property type="term" value="C:cytoskeleton"/>
    <property type="evidence" value="ECO:0000304"/>
    <property type="project" value="UniProtKB"/>
</dbReference>
<dbReference type="GO" id="GO:0005829">
    <property type="term" value="C:cytosol"/>
    <property type="evidence" value="ECO:0000304"/>
    <property type="project" value="Reactome"/>
</dbReference>
<dbReference type="GO" id="GO:0030016">
    <property type="term" value="C:myofibril"/>
    <property type="evidence" value="ECO:0007669"/>
    <property type="project" value="UniProtKB-SubCell"/>
</dbReference>
<dbReference type="GO" id="GO:0005886">
    <property type="term" value="C:plasma membrane"/>
    <property type="evidence" value="ECO:0000314"/>
    <property type="project" value="HPA"/>
</dbReference>
<dbReference type="GO" id="GO:0001725">
    <property type="term" value="C:stress fiber"/>
    <property type="evidence" value="ECO:0007669"/>
    <property type="project" value="UniProtKB-SubCell"/>
</dbReference>
<dbReference type="GO" id="GO:0003779">
    <property type="term" value="F:actin binding"/>
    <property type="evidence" value="ECO:0000304"/>
    <property type="project" value="ProtInc"/>
</dbReference>
<dbReference type="GO" id="GO:0045296">
    <property type="term" value="F:cadherin binding"/>
    <property type="evidence" value="ECO:0007005"/>
    <property type="project" value="BHF-UCL"/>
</dbReference>
<dbReference type="GO" id="GO:0005516">
    <property type="term" value="F:calmodulin binding"/>
    <property type="evidence" value="ECO:0000304"/>
    <property type="project" value="ProtInc"/>
</dbReference>
<dbReference type="GO" id="GO:0017022">
    <property type="term" value="F:myosin binding"/>
    <property type="evidence" value="ECO:0007669"/>
    <property type="project" value="InterPro"/>
</dbReference>
<dbReference type="GO" id="GO:0005523">
    <property type="term" value="F:tropomyosin binding"/>
    <property type="evidence" value="ECO:0000304"/>
    <property type="project" value="ProtInc"/>
</dbReference>
<dbReference type="GO" id="GO:0051017">
    <property type="term" value="P:actin filament bundle assembly"/>
    <property type="evidence" value="ECO:0000318"/>
    <property type="project" value="GO_Central"/>
</dbReference>
<dbReference type="GO" id="GO:0006936">
    <property type="term" value="P:muscle contraction"/>
    <property type="evidence" value="ECO:0007669"/>
    <property type="project" value="InterPro"/>
</dbReference>
<dbReference type="InterPro" id="IPR006017">
    <property type="entry name" value="Caldesmon"/>
</dbReference>
<dbReference type="InterPro" id="IPR006018">
    <property type="entry name" value="Caldesmon_LSP"/>
</dbReference>
<dbReference type="PANTHER" id="PTHR18949">
    <property type="entry name" value="CALDESMON"/>
    <property type="match status" value="1"/>
</dbReference>
<dbReference type="PANTHER" id="PTHR18949:SF0">
    <property type="entry name" value="CALDESMON"/>
    <property type="match status" value="1"/>
</dbReference>
<dbReference type="Pfam" id="PF02029">
    <property type="entry name" value="Caldesmon"/>
    <property type="match status" value="2"/>
</dbReference>
<dbReference type="PRINTS" id="PR01076">
    <property type="entry name" value="CALDESMON"/>
</dbReference>
<protein>
    <recommendedName>
        <fullName>Caldesmon</fullName>
        <shortName>CDM</shortName>
    </recommendedName>
</protein>
<reference key="1">
    <citation type="journal article" date="1991" name="J. Biol. Chem.">
        <title>Characterization of cDNA clones encoding a human fibroblast caldesmon isoform and analysis of caldesmon expression in normal and transformed cells.</title>
        <authorList>
            <person name="Novy R.E."/>
            <person name="Lin J.L.-C."/>
            <person name="Lin J.J.-C."/>
        </authorList>
    </citation>
    <scope>NUCLEOTIDE SEQUENCE [MRNA] (ISOFORM 4)</scope>
    <source>
        <tissue>Lung fibroblast</tissue>
    </source>
</reference>
<reference key="2">
    <citation type="journal article" date="1992" name="Gene">
        <title>Cloning of cDNAs encoding human caldesmons.</title>
        <authorList>
            <person name="Humphrey M.B."/>
            <person name="Herrera-Sosa H."/>
            <person name="Gonzalez G."/>
            <person name="Lee R."/>
            <person name="Bryan J."/>
        </authorList>
    </citation>
    <scope>NUCLEOTIDE SEQUENCE [MRNA] (ISOFORMS 1 AND 4)</scope>
    <scope>VARIANT ARG-397</scope>
    <source>
        <tissue>Aorta</tissue>
    </source>
</reference>
<reference key="3">
    <citation type="journal article" date="1992" name="Proc. Natl. Acad. Sci. U.S.A.">
        <title>Genomic structure of the human caldesmon gene.</title>
        <authorList>
            <person name="Hayashi K."/>
            <person name="Yano H."/>
            <person name="Hashida T."/>
            <person name="Takeuchi R."/>
            <person name="Takeda O."/>
            <person name="Asada K."/>
            <person name="Takahashi E."/>
            <person name="Kato I."/>
            <person name="Sobue K."/>
        </authorList>
    </citation>
    <scope>NUCLEOTIDE SEQUENCE [MRNA] (ISOFORMS 2; 3 AND 5)</scope>
</reference>
<reference key="4">
    <citation type="journal article" date="2004" name="Nat. Genet.">
        <title>Complete sequencing and characterization of 21,243 full-length human cDNAs.</title>
        <authorList>
            <person name="Ota T."/>
            <person name="Suzuki Y."/>
            <person name="Nishikawa T."/>
            <person name="Otsuki T."/>
            <person name="Sugiyama T."/>
            <person name="Irie R."/>
            <person name="Wakamatsu A."/>
            <person name="Hayashi K."/>
            <person name="Sato H."/>
            <person name="Nagai K."/>
            <person name="Kimura K."/>
            <person name="Makita H."/>
            <person name="Sekine M."/>
            <person name="Obayashi M."/>
            <person name="Nishi T."/>
            <person name="Shibahara T."/>
            <person name="Tanaka T."/>
            <person name="Ishii S."/>
            <person name="Yamamoto J."/>
            <person name="Saito K."/>
            <person name="Kawai Y."/>
            <person name="Isono Y."/>
            <person name="Nakamura Y."/>
            <person name="Nagahari K."/>
            <person name="Murakami K."/>
            <person name="Yasuda T."/>
            <person name="Iwayanagi T."/>
            <person name="Wagatsuma M."/>
            <person name="Shiratori A."/>
            <person name="Sudo H."/>
            <person name="Hosoiri T."/>
            <person name="Kaku Y."/>
            <person name="Kodaira H."/>
            <person name="Kondo H."/>
            <person name="Sugawara M."/>
            <person name="Takahashi M."/>
            <person name="Kanda K."/>
            <person name="Yokoi T."/>
            <person name="Furuya T."/>
            <person name="Kikkawa E."/>
            <person name="Omura Y."/>
            <person name="Abe K."/>
            <person name="Kamihara K."/>
            <person name="Katsuta N."/>
            <person name="Sato K."/>
            <person name="Tanikawa M."/>
            <person name="Yamazaki M."/>
            <person name="Ninomiya K."/>
            <person name="Ishibashi T."/>
            <person name="Yamashita H."/>
            <person name="Murakawa K."/>
            <person name="Fujimori K."/>
            <person name="Tanai H."/>
            <person name="Kimata M."/>
            <person name="Watanabe M."/>
            <person name="Hiraoka S."/>
            <person name="Chiba Y."/>
            <person name="Ishida S."/>
            <person name="Ono Y."/>
            <person name="Takiguchi S."/>
            <person name="Watanabe S."/>
            <person name="Yosida M."/>
            <person name="Hotuta T."/>
            <person name="Kusano J."/>
            <person name="Kanehori K."/>
            <person name="Takahashi-Fujii A."/>
            <person name="Hara H."/>
            <person name="Tanase T.-O."/>
            <person name="Nomura Y."/>
            <person name="Togiya S."/>
            <person name="Komai F."/>
            <person name="Hara R."/>
            <person name="Takeuchi K."/>
            <person name="Arita M."/>
            <person name="Imose N."/>
            <person name="Musashino K."/>
            <person name="Yuuki H."/>
            <person name="Oshima A."/>
            <person name="Sasaki N."/>
            <person name="Aotsuka S."/>
            <person name="Yoshikawa Y."/>
            <person name="Matsunawa H."/>
            <person name="Ichihara T."/>
            <person name="Shiohata N."/>
            <person name="Sano S."/>
            <person name="Moriya S."/>
            <person name="Momiyama H."/>
            <person name="Satoh N."/>
            <person name="Takami S."/>
            <person name="Terashima Y."/>
            <person name="Suzuki O."/>
            <person name="Nakagawa S."/>
            <person name="Senoh A."/>
            <person name="Mizoguchi H."/>
            <person name="Goto Y."/>
            <person name="Shimizu F."/>
            <person name="Wakebe H."/>
            <person name="Hishigaki H."/>
            <person name="Watanabe T."/>
            <person name="Sugiyama A."/>
            <person name="Takemoto M."/>
            <person name="Kawakami B."/>
            <person name="Yamazaki M."/>
            <person name="Watanabe K."/>
            <person name="Kumagai A."/>
            <person name="Itakura S."/>
            <person name="Fukuzumi Y."/>
            <person name="Fujimori Y."/>
            <person name="Komiyama M."/>
            <person name="Tashiro H."/>
            <person name="Tanigami A."/>
            <person name="Fujiwara T."/>
            <person name="Ono T."/>
            <person name="Yamada K."/>
            <person name="Fujii Y."/>
            <person name="Ozaki K."/>
            <person name="Hirao M."/>
            <person name="Ohmori Y."/>
            <person name="Kawabata A."/>
            <person name="Hikiji T."/>
            <person name="Kobatake N."/>
            <person name="Inagaki H."/>
            <person name="Ikema Y."/>
            <person name="Okamoto S."/>
            <person name="Okitani R."/>
            <person name="Kawakami T."/>
            <person name="Noguchi S."/>
            <person name="Itoh T."/>
            <person name="Shigeta K."/>
            <person name="Senba T."/>
            <person name="Matsumura K."/>
            <person name="Nakajima Y."/>
            <person name="Mizuno T."/>
            <person name="Morinaga M."/>
            <person name="Sasaki M."/>
            <person name="Togashi T."/>
            <person name="Oyama M."/>
            <person name="Hata H."/>
            <person name="Watanabe M."/>
            <person name="Komatsu T."/>
            <person name="Mizushima-Sugano J."/>
            <person name="Satoh T."/>
            <person name="Shirai Y."/>
            <person name="Takahashi Y."/>
            <person name="Nakagawa K."/>
            <person name="Okumura K."/>
            <person name="Nagase T."/>
            <person name="Nomura N."/>
            <person name="Kikuchi H."/>
            <person name="Masuho Y."/>
            <person name="Yamashita R."/>
            <person name="Nakai K."/>
            <person name="Yada T."/>
            <person name="Nakamura Y."/>
            <person name="Ohara O."/>
            <person name="Isogai T."/>
            <person name="Sugano S."/>
        </authorList>
    </citation>
    <scope>NUCLEOTIDE SEQUENCE [LARGE SCALE MRNA] (ISOFORM 6)</scope>
    <source>
        <tissue>Amygdala</tissue>
    </source>
</reference>
<reference key="5">
    <citation type="journal article" date="2003" name="Nature">
        <title>The DNA sequence of human chromosome 7.</title>
        <authorList>
            <person name="Hillier L.W."/>
            <person name="Fulton R.S."/>
            <person name="Fulton L.A."/>
            <person name="Graves T.A."/>
            <person name="Pepin K.H."/>
            <person name="Wagner-McPherson C."/>
            <person name="Layman D."/>
            <person name="Maas J."/>
            <person name="Jaeger S."/>
            <person name="Walker R."/>
            <person name="Wylie K."/>
            <person name="Sekhon M."/>
            <person name="Becker M.C."/>
            <person name="O'Laughlin M.D."/>
            <person name="Schaller M.E."/>
            <person name="Fewell G.A."/>
            <person name="Delehaunty K.D."/>
            <person name="Miner T.L."/>
            <person name="Nash W.E."/>
            <person name="Cordes M."/>
            <person name="Du H."/>
            <person name="Sun H."/>
            <person name="Edwards J."/>
            <person name="Bradshaw-Cordum H."/>
            <person name="Ali J."/>
            <person name="Andrews S."/>
            <person name="Isak A."/>
            <person name="Vanbrunt A."/>
            <person name="Nguyen C."/>
            <person name="Du F."/>
            <person name="Lamar B."/>
            <person name="Courtney L."/>
            <person name="Kalicki J."/>
            <person name="Ozersky P."/>
            <person name="Bielicki L."/>
            <person name="Scott K."/>
            <person name="Holmes A."/>
            <person name="Harkins R."/>
            <person name="Harris A."/>
            <person name="Strong C.M."/>
            <person name="Hou S."/>
            <person name="Tomlinson C."/>
            <person name="Dauphin-Kohlberg S."/>
            <person name="Kozlowicz-Reilly A."/>
            <person name="Leonard S."/>
            <person name="Rohlfing T."/>
            <person name="Rock S.M."/>
            <person name="Tin-Wollam A.-M."/>
            <person name="Abbott A."/>
            <person name="Minx P."/>
            <person name="Maupin R."/>
            <person name="Strowmatt C."/>
            <person name="Latreille P."/>
            <person name="Miller N."/>
            <person name="Johnson D."/>
            <person name="Murray J."/>
            <person name="Woessner J.P."/>
            <person name="Wendl M.C."/>
            <person name="Yang S.-P."/>
            <person name="Schultz B.R."/>
            <person name="Wallis J.W."/>
            <person name="Spieth J."/>
            <person name="Bieri T.A."/>
            <person name="Nelson J.O."/>
            <person name="Berkowicz N."/>
            <person name="Wohldmann P.E."/>
            <person name="Cook L.L."/>
            <person name="Hickenbotham M.T."/>
            <person name="Eldred J."/>
            <person name="Williams D."/>
            <person name="Bedell J.A."/>
            <person name="Mardis E.R."/>
            <person name="Clifton S.W."/>
            <person name="Chissoe S.L."/>
            <person name="Marra M.A."/>
            <person name="Raymond C."/>
            <person name="Haugen E."/>
            <person name="Gillett W."/>
            <person name="Zhou Y."/>
            <person name="James R."/>
            <person name="Phelps K."/>
            <person name="Iadanoto S."/>
            <person name="Bubb K."/>
            <person name="Simms E."/>
            <person name="Levy R."/>
            <person name="Clendenning J."/>
            <person name="Kaul R."/>
            <person name="Kent W.J."/>
            <person name="Furey T.S."/>
            <person name="Baertsch R.A."/>
            <person name="Brent M.R."/>
            <person name="Keibler E."/>
            <person name="Flicek P."/>
            <person name="Bork P."/>
            <person name="Suyama M."/>
            <person name="Bailey J.A."/>
            <person name="Portnoy M.E."/>
            <person name="Torrents D."/>
            <person name="Chinwalla A.T."/>
            <person name="Gish W.R."/>
            <person name="Eddy S.R."/>
            <person name="McPherson J.D."/>
            <person name="Olson M.V."/>
            <person name="Eichler E.E."/>
            <person name="Green E.D."/>
            <person name="Waterston R.H."/>
            <person name="Wilson R.K."/>
        </authorList>
    </citation>
    <scope>NUCLEOTIDE SEQUENCE [LARGE SCALE GENOMIC DNA]</scope>
</reference>
<reference key="6">
    <citation type="journal article" date="2004" name="Genome Res.">
        <title>The status, quality, and expansion of the NIH full-length cDNA project: the Mammalian Gene Collection (MGC).</title>
        <authorList>
            <consortium name="The MGC Project Team"/>
        </authorList>
    </citation>
    <scope>NUCLEOTIDE SEQUENCE [LARGE SCALE MRNA] (ISOFORM 4)</scope>
    <source>
        <tissue>Skin</tissue>
    </source>
</reference>
<reference key="7">
    <citation type="journal article" date="1993" name="J. Muscle Res. Cell Motil.">
        <title>Identification of functioning regulatory sites and a new myosin binding site in the C-terminal 288 amino acids of caldesmon expressed from a human clone.</title>
        <authorList>
            <person name="Huber P.A.J."/>
            <person name="Redwood C.S."/>
            <person name="Avent N.D."/>
            <person name="Tanner M.J.A."/>
            <person name="Marston S.B."/>
        </authorList>
    </citation>
    <scope>NUCLEOTIDE SEQUENCE [MRNA] OF 497-793</scope>
    <scope>FUNCTION</scope>
    <source>
        <tissue>Fetal liver</tissue>
    </source>
</reference>
<reference key="8">
    <citation type="journal article" date="2006" name="Cell">
        <title>Global, in vivo, and site-specific phosphorylation dynamics in signaling networks.</title>
        <authorList>
            <person name="Olsen J.V."/>
            <person name="Blagoev B."/>
            <person name="Gnad F."/>
            <person name="Macek B."/>
            <person name="Kumar C."/>
            <person name="Mortensen P."/>
            <person name="Mann M."/>
        </authorList>
    </citation>
    <scope>PHOSPHORYLATION [LARGE SCALE ANALYSIS] AT THR-730</scope>
    <scope>PHOSPHORYLATION [LARGE SCALE ANALYSIS] AT SER-202 (ISOFORMS 2; 4 AND 6)</scope>
    <scope>PHOSPHORYLATION [LARGE SCALE ANALYSIS] AT SER-196 (ISOFORMS 3 AND 5)</scope>
    <scope>IDENTIFICATION BY MASS SPECTROMETRY [LARGE SCALE ANALYSIS]</scope>
    <source>
        <tissue>Cervix carcinoma</tissue>
    </source>
</reference>
<reference key="9">
    <citation type="journal article" date="2007" name="J. Proteome Res.">
        <title>Improved titanium dioxide enrichment of phosphopeptides from HeLa cells and high confident phosphopeptide identification by cross-validation of MS/MS and MS/MS/MS spectra.</title>
        <authorList>
            <person name="Yu L.R."/>
            <person name="Zhu Z."/>
            <person name="Chan K.C."/>
            <person name="Issaq H.J."/>
            <person name="Dimitrov D.S."/>
            <person name="Veenstra T.D."/>
        </authorList>
    </citation>
    <scope>PHOSPHORYLATION [LARGE SCALE ANALYSIS] AT THR-730</scope>
    <scope>IDENTIFICATION BY MASS SPECTROMETRY [LARGE SCALE ANALYSIS]</scope>
    <source>
        <tissue>Cervix carcinoma</tissue>
    </source>
</reference>
<reference key="10">
    <citation type="journal article" date="2008" name="Proc. Natl. Acad. Sci. U.S.A.">
        <title>A quantitative atlas of mitotic phosphorylation.</title>
        <authorList>
            <person name="Dephoure N."/>
            <person name="Zhou C."/>
            <person name="Villen J."/>
            <person name="Beausoleil S.A."/>
            <person name="Bakalarski C.E."/>
            <person name="Elledge S.J."/>
            <person name="Gygi S.P."/>
        </authorList>
    </citation>
    <scope>PHOSPHORYLATION [LARGE SCALE ANALYSIS] AT SER-724; THR-730; THR-753 AND SER-789</scope>
    <scope>PHOSPHORYLATION [LARGE SCALE ANALYSIS] AT SER-12 (ISOFORMS 3 AND 5)</scope>
    <scope>IDENTIFICATION BY MASS SPECTROMETRY [LARGE SCALE ANALYSIS]</scope>
    <source>
        <tissue>Cervix carcinoma</tissue>
    </source>
</reference>
<reference key="11">
    <citation type="journal article" date="2009" name="Anal. Chem.">
        <title>Lys-N and trypsin cover complementary parts of the phosphoproteome in a refined SCX-based approach.</title>
        <authorList>
            <person name="Gauci S."/>
            <person name="Helbig A.O."/>
            <person name="Slijper M."/>
            <person name="Krijgsveld J."/>
            <person name="Heck A.J."/>
            <person name="Mohammed S."/>
        </authorList>
    </citation>
    <scope>IDENTIFICATION BY MASS SPECTROMETRY [LARGE SCALE ANALYSIS]</scope>
</reference>
<reference key="12">
    <citation type="journal article" date="2010" name="Sci. Signal.">
        <title>Quantitative phosphoproteomics reveals widespread full phosphorylation site occupancy during mitosis.</title>
        <authorList>
            <person name="Olsen J.V."/>
            <person name="Vermeulen M."/>
            <person name="Santamaria A."/>
            <person name="Kumar C."/>
            <person name="Miller M.L."/>
            <person name="Jensen L.J."/>
            <person name="Gnad F."/>
            <person name="Cox J."/>
            <person name="Jensen T.S."/>
            <person name="Nigg E.A."/>
            <person name="Brunak S."/>
            <person name="Mann M."/>
        </authorList>
    </citation>
    <scope>PHOSPHORYLATION [LARGE SCALE ANALYSIS] AT SER-724; THR-730 AND THR-753</scope>
    <scope>PHOSPHORYLATION [LARGE SCALE ANALYSIS] AT SER-202 (ISOFORMS 2; 4 AND 6)</scope>
    <scope>PHOSPHORYLATION [LARGE SCALE ANALYSIS] AT SER-12; TYR-21 AND SER-196 (ISOFORMS 3 AND 5)</scope>
    <scope>IDENTIFICATION BY MASS SPECTROMETRY [LARGE SCALE ANALYSIS]</scope>
    <source>
        <tissue>Cervix carcinoma</tissue>
    </source>
</reference>
<reference key="13">
    <citation type="journal article" date="2011" name="BMC Syst. Biol.">
        <title>Initial characterization of the human central proteome.</title>
        <authorList>
            <person name="Burkard T.R."/>
            <person name="Planyavsky M."/>
            <person name="Kaupe I."/>
            <person name="Breitwieser F.P."/>
            <person name="Buerckstuemmer T."/>
            <person name="Bennett K.L."/>
            <person name="Superti-Furga G."/>
            <person name="Colinge J."/>
        </authorList>
    </citation>
    <scope>IDENTIFICATION BY MASS SPECTROMETRY [LARGE SCALE ANALYSIS]</scope>
</reference>
<reference key="14">
    <citation type="journal article" date="2011" name="Sci. Signal.">
        <title>System-wide temporal characterization of the proteome and phosphoproteome of human embryonic stem cell differentiation.</title>
        <authorList>
            <person name="Rigbolt K.T."/>
            <person name="Prokhorova T.A."/>
            <person name="Akimov V."/>
            <person name="Henningsen J."/>
            <person name="Johansen P.T."/>
            <person name="Kratchmarova I."/>
            <person name="Kassem M."/>
            <person name="Mann M."/>
            <person name="Olsen J.V."/>
            <person name="Blagoev B."/>
        </authorList>
    </citation>
    <scope>PHOSPHORYLATION [LARGE SCALE ANALYSIS] AT SER-643 AND SER-789</scope>
    <scope>PHOSPHORYLATION [LARGE SCALE ANALYSIS] AT SER-202 (ISOFORMS 2; 4 AND 6)</scope>
    <scope>PHOSPHORYLATION [LARGE SCALE ANALYSIS] AT SER-196 (ISOFORMS 3 AND 5)</scope>
    <scope>IDENTIFICATION BY MASS SPECTROMETRY [LARGE SCALE ANALYSIS]</scope>
</reference>
<reference key="15">
    <citation type="journal article" date="2013" name="J. Proteome Res.">
        <title>Toward a comprehensive characterization of a human cancer cell phosphoproteome.</title>
        <authorList>
            <person name="Zhou H."/>
            <person name="Di Palma S."/>
            <person name="Preisinger C."/>
            <person name="Peng M."/>
            <person name="Polat A.N."/>
            <person name="Heck A.J."/>
            <person name="Mohammed S."/>
        </authorList>
    </citation>
    <scope>PHOSPHORYLATION [LARGE SCALE ANALYSIS] AT SER-656; THR-730; THR-753 AND SER-759</scope>
    <scope>IDENTIFICATION BY MASS SPECTROMETRY [LARGE SCALE ANALYSIS]</scope>
    <source>
        <tissue>Cervix carcinoma</tissue>
    </source>
</reference>
<reference key="16">
    <citation type="journal article" date="2014" name="J. Proteomics">
        <title>An enzyme assisted RP-RPLC approach for in-depth analysis of human liver phosphoproteome.</title>
        <authorList>
            <person name="Bian Y."/>
            <person name="Song C."/>
            <person name="Cheng K."/>
            <person name="Dong M."/>
            <person name="Wang F."/>
            <person name="Huang J."/>
            <person name="Sun D."/>
            <person name="Wang L."/>
            <person name="Ye M."/>
            <person name="Zou H."/>
        </authorList>
    </citation>
    <scope>PHOSPHORYLATION [LARGE SCALE ANALYSIS] AT SER-129 AND THR-753</scope>
    <scope>PHOSPHORYLATION [LARGE SCALE ANALYSIS] AT SER-202 (ISOFORMS 2; 4 AND 6)</scope>
    <scope>PHOSPHORYLATION [LARGE SCALE ANALYSIS] AT SER-196 (ISOFORMS 3 AND 5)</scope>
    <scope>IDENTIFICATION BY MASS SPECTROMETRY [LARGE SCALE ANALYSIS]</scope>
    <source>
        <tissue>Liver</tissue>
    </source>
</reference>
<reference key="17">
    <citation type="journal article" date="2017" name="Nat. Struct. Mol. Biol.">
        <title>Site-specific mapping of the human SUMO proteome reveals co-modification with phosphorylation.</title>
        <authorList>
            <person name="Hendriks I.A."/>
            <person name="Lyon D."/>
            <person name="Young C."/>
            <person name="Jensen L.J."/>
            <person name="Vertegaal A.C."/>
            <person name="Nielsen M.L."/>
        </authorList>
    </citation>
    <scope>SUMOYLATION [LARGE SCALE ANALYSIS] AT LYS-459 AND LYS-645</scope>
    <scope>SUMOYLATION [LARGE SCALE ANALYSIS] AT LYS-209 (ISOFORM 4)</scope>
    <scope>SUMOYLATION [LARGE SCALE ANALYSIS] AT LYS-203 (ISOFORM 5)</scope>
    <scope>IDENTIFICATION BY MASS SPECTROMETRY [LARGE SCALE ANALYSIS]</scope>
</reference>
<proteinExistence type="evidence at protein level"/>
<sequence>MDDFERRRELRRQKREEMRLEAERIAYQRNDDDEEEAARERRRRARQERLRQKQEEESLGQVTDQVEVNAQNSVPDEEAKTTTTNTQVEGDDEAAFLERLARREERRQKRLQEALERQKEFDPTITDASLSLPSRRMQNDTAENETTEKEEKSESRQERYEIEETETVTKSYQKNDWRDAEENKKEDKEKEEEEEEKPKRGSIGENQVEVMVEEKTTESQEETVVMSLKNGQISSEEPKQEEEREQGSDEISHHEKMEEEDKERAEAERARLEAEERERIKAEQDKKIADERARIEAEEKAAAQERERREAEERERMREEEKRAAEERQRIKEEEKRAAEERQRIKEEEKRAAEERQRIKEEEKRAAEERQRARAEEEEKAKVEEQKRNKQLEEKKHAMQETKIKGEKVEQKIEGKWVNEKKAQEDKLQTAVLKKQGEEKGTKVQAKREKLQEDKPTFKKEEIKDEKIKKDKEPKEEVKSFMDRKKGFTEVKSQNGEFMTHKLKHTENTFSRPGGRASVDTKEAEGAPQVEAGKRLEELRRRRGETESEEFEKLKQKQQEAALELEELKKKREERRKVLEEEEQRRKQEEADRKLREEEEKRRLKEEIERRRAEAAEKRQKMPEDGLSDDKKPFKCFTPKGSSLKIEERAEFLNKSVQKSSGVKSTHQAAIVSKIDSRLEQYTSAIEGTKSAKPTKPAASDLPVPAEGVRNIKSMWEKGNVFSSPTAAGTPNKETAGLKVGVSSRINEWLTKTPDGNKSPAPKPSDLRPGDVSSKRNLWEKQSVDKVTSPTKV</sequence>
<evidence type="ECO:0000250" key="1"/>
<evidence type="ECO:0000250" key="2">
    <source>
        <dbReference type="UniProtKB" id="P13505"/>
    </source>
</evidence>
<evidence type="ECO:0000255" key="3"/>
<evidence type="ECO:0000256" key="4">
    <source>
        <dbReference type="SAM" id="MobiDB-lite"/>
    </source>
</evidence>
<evidence type="ECO:0000269" key="5">
    <source>
    </source>
</evidence>
<evidence type="ECO:0000269" key="6">
    <source>
    </source>
</evidence>
<evidence type="ECO:0000303" key="7">
    <source>
    </source>
</evidence>
<evidence type="ECO:0000303" key="8">
    <source>
    </source>
</evidence>
<evidence type="ECO:0000303" key="9">
    <source>
    </source>
</evidence>
<evidence type="ECO:0000303" key="10">
    <source>
    </source>
</evidence>
<evidence type="ECO:0000303" key="11">
    <source>
    </source>
</evidence>
<evidence type="ECO:0000305" key="12"/>
<evidence type="ECO:0007744" key="13">
    <source>
    </source>
</evidence>
<evidence type="ECO:0007744" key="14">
    <source>
    </source>
</evidence>
<evidence type="ECO:0007744" key="15">
    <source>
    </source>
</evidence>
<evidence type="ECO:0007744" key="16">
    <source>
    </source>
</evidence>
<evidence type="ECO:0007744" key="17">
    <source>
    </source>
</evidence>
<evidence type="ECO:0007744" key="18">
    <source>
    </source>
</evidence>
<evidence type="ECO:0007744" key="19">
    <source>
    </source>
</evidence>
<evidence type="ECO:0007744" key="20">
    <source>
    </source>
</evidence>
<gene>
    <name type="primary">CALD1</name>
    <name type="synonym">CAD</name>
    <name type="synonym">CDM</name>
</gene>
<comment type="function">
    <text evidence="1 6">Actin- and myosin-binding protein implicated in the regulation of actomyosin interactions in smooth muscle and nonmuscle cells (could act as a bridge between myosin and actin filaments). Stimulates actin binding of tropomyosin which increases the stabilization of actin filament structure. In muscle tissues, inhibits the actomyosin ATPase by binding to F-actin. This inhibition is attenuated by calcium-calmodulin and is potentiated by tropomyosin. Interacts with actin, myosin, two molecules of tropomyosin and with calmodulin. Also plays an essential role during cellular mitosis and receptor capping. Involved in Schwann cell migration during peripheral nerve regeneration (By similarity).</text>
</comment>
<comment type="interaction">
    <interactant intactId="EBI-1642116">
        <id>Q05682</id>
    </interactant>
    <interactant intactId="EBI-351450">
        <id>Q13813</id>
        <label>SPTAN1</label>
    </interactant>
    <organismsDiffer>false</organismsDiffer>
    <experiments>2</experiments>
</comment>
<comment type="interaction">
    <interactant intactId="EBI-1642116">
        <id>Q05682</id>
    </interactant>
    <interactant intactId="EBI-717399">
        <id>Q9BSI4</id>
        <label>TINF2</label>
    </interactant>
    <organismsDiffer>false</organismsDiffer>
    <experiments>2</experiments>
</comment>
<comment type="subcellular location">
    <subcellularLocation>
        <location evidence="2">Cytoplasm</location>
        <location evidence="2">Cytoskeleton</location>
    </subcellularLocation>
    <subcellularLocation>
        <location evidence="2">Cytoplasm</location>
        <location evidence="2">Myofibril</location>
    </subcellularLocation>
    <subcellularLocation>
        <location evidence="2">Cytoplasm</location>
        <location evidence="2">Cytoskeleton</location>
        <location evidence="2">Stress fiber</location>
    </subcellularLocation>
    <text evidence="2">On thin filaments in smooth muscle and on stress fibers in fibroblasts (nonmuscle).</text>
</comment>
<comment type="alternative products">
    <event type="alternative splicing"/>
    <isoform>
        <id>Q05682-1</id>
        <name>1</name>
        <name>H-CAD</name>
        <sequence type="displayed"/>
    </isoform>
    <isoform>
        <id>Q05682-2</id>
        <name>2</name>
        <name>WI-38 L-CAD I</name>
        <sequence type="described" ref="VSP_004155"/>
    </isoform>
    <isoform>
        <id>Q05682-3</id>
        <name>3</name>
        <name>HELA L-CAD I</name>
        <sequence type="described" ref="VSP_004154 VSP_004155"/>
    </isoform>
    <isoform>
        <id>Q05682-4</id>
        <name>4</name>
        <name>WI-38 L-CAD II</name>
        <name>1-CAD</name>
        <sequence type="described" ref="VSP_004156"/>
    </isoform>
    <isoform>
        <id>Q05682-5</id>
        <name>5</name>
        <name>HELA L-CAD II</name>
        <sequence type="described" ref="VSP_004154 VSP_004156"/>
    </isoform>
    <isoform>
        <id>Q05682-6</id>
        <name>6</name>
        <sequence type="described" ref="VSP_004155 VSP_043292"/>
    </isoform>
</comment>
<comment type="tissue specificity">
    <text>High-molecular-weight caldesmon (isoform 1) is predominantly expressed in smooth muscles, whereas low-molecular-weight caldesmon (isoforms 2, 3, 4 and 5) are widely distributed in non-muscle tissues and cells. Not expressed in skeletal muscle or heart.</text>
</comment>
<comment type="domain">
    <text>The N-terminal part seems to be a myosin/calmodulin-binding domain, and the C-terminal a tropomyosin/actin/calmodulin-binding domain. These two domains are separated by a central helical region in the smooth-muscle form.</text>
</comment>
<comment type="PTM">
    <text evidence="1">In non-muscle cells, phosphorylation by CDK1 during mitosis causes caldesmon to dissociate from microfilaments. Phosphorylation reduces caldesmon binding to actin, myosin, and calmodulin as well as its inhibition of actomyosin ATPase activity. Phosphorylation also occurs in both quiescent and dividing smooth muscle cells with similar effects on the interaction with actin and calmodulin and on microfilaments reorganization. CDK1-mediated phosphorylation promotes Schwann cell migration during peripheral nerve regeneration (By similarity).</text>
</comment>
<comment type="similarity">
    <text evidence="12">Belongs to the caldesmon family.</text>
</comment>